<comment type="function">
    <text evidence="1">Catalyzes the phosphorylation of the position 2 hydroxy group of 4-diphosphocytidyl-2C-methyl-D-erythritol.</text>
</comment>
<comment type="catalytic activity">
    <reaction evidence="1">
        <text>4-CDP-2-C-methyl-D-erythritol + ATP = 4-CDP-2-C-methyl-D-erythritol 2-phosphate + ADP + H(+)</text>
        <dbReference type="Rhea" id="RHEA:18437"/>
        <dbReference type="ChEBI" id="CHEBI:15378"/>
        <dbReference type="ChEBI" id="CHEBI:30616"/>
        <dbReference type="ChEBI" id="CHEBI:57823"/>
        <dbReference type="ChEBI" id="CHEBI:57919"/>
        <dbReference type="ChEBI" id="CHEBI:456216"/>
        <dbReference type="EC" id="2.7.1.148"/>
    </reaction>
</comment>
<comment type="pathway">
    <text evidence="1">Isoprenoid biosynthesis; isopentenyl diphosphate biosynthesis via DXP pathway; isopentenyl diphosphate from 1-deoxy-D-xylulose 5-phosphate: step 3/6.</text>
</comment>
<comment type="similarity">
    <text evidence="1">Belongs to the GHMP kinase family. IspE subfamily.</text>
</comment>
<accession>Q145X1</accession>
<gene>
    <name evidence="1" type="primary">ispE</name>
    <name type="ordered locus">Bxeno_A0330</name>
    <name type="ORF">Bxe_A4132</name>
</gene>
<reference key="1">
    <citation type="journal article" date="2006" name="Proc. Natl. Acad. Sci. U.S.A.">
        <title>Burkholderia xenovorans LB400 harbors a multi-replicon, 9.73-Mbp genome shaped for versatility.</title>
        <authorList>
            <person name="Chain P.S.G."/>
            <person name="Denef V.J."/>
            <person name="Konstantinidis K.T."/>
            <person name="Vergez L.M."/>
            <person name="Agullo L."/>
            <person name="Reyes V.L."/>
            <person name="Hauser L."/>
            <person name="Cordova M."/>
            <person name="Gomez L."/>
            <person name="Gonzalez M."/>
            <person name="Land M."/>
            <person name="Lao V."/>
            <person name="Larimer F."/>
            <person name="LiPuma J.J."/>
            <person name="Mahenthiralingam E."/>
            <person name="Malfatti S.A."/>
            <person name="Marx C.J."/>
            <person name="Parnell J.J."/>
            <person name="Ramette A."/>
            <person name="Richardson P."/>
            <person name="Seeger M."/>
            <person name="Smith D."/>
            <person name="Spilker T."/>
            <person name="Sul W.J."/>
            <person name="Tsoi T.V."/>
            <person name="Ulrich L.E."/>
            <person name="Zhulin I.B."/>
            <person name="Tiedje J.M."/>
        </authorList>
    </citation>
    <scope>NUCLEOTIDE SEQUENCE [LARGE SCALE GENOMIC DNA]</scope>
    <source>
        <strain>LB400</strain>
    </source>
</reference>
<dbReference type="EC" id="2.7.1.148" evidence="1"/>
<dbReference type="EMBL" id="CP000270">
    <property type="protein sequence ID" value="ABE28868.1"/>
    <property type="molecule type" value="Genomic_DNA"/>
</dbReference>
<dbReference type="RefSeq" id="WP_011486699.1">
    <property type="nucleotide sequence ID" value="NC_007951.1"/>
</dbReference>
<dbReference type="SMR" id="Q145X1"/>
<dbReference type="STRING" id="266265.Bxe_A4132"/>
<dbReference type="KEGG" id="bxb:DR64_1808"/>
<dbReference type="KEGG" id="bxe:Bxe_A4132"/>
<dbReference type="PATRIC" id="fig|266265.5.peg.350"/>
<dbReference type="eggNOG" id="COG1947">
    <property type="taxonomic scope" value="Bacteria"/>
</dbReference>
<dbReference type="OrthoDB" id="9809438at2"/>
<dbReference type="UniPathway" id="UPA00056">
    <property type="reaction ID" value="UER00094"/>
</dbReference>
<dbReference type="Proteomes" id="UP000001817">
    <property type="component" value="Chromosome 1"/>
</dbReference>
<dbReference type="GO" id="GO:0050515">
    <property type="term" value="F:4-(cytidine 5'-diphospho)-2-C-methyl-D-erythritol kinase activity"/>
    <property type="evidence" value="ECO:0007669"/>
    <property type="project" value="UniProtKB-UniRule"/>
</dbReference>
<dbReference type="GO" id="GO:0005524">
    <property type="term" value="F:ATP binding"/>
    <property type="evidence" value="ECO:0007669"/>
    <property type="project" value="UniProtKB-UniRule"/>
</dbReference>
<dbReference type="GO" id="GO:0019288">
    <property type="term" value="P:isopentenyl diphosphate biosynthetic process, methylerythritol 4-phosphate pathway"/>
    <property type="evidence" value="ECO:0007669"/>
    <property type="project" value="UniProtKB-UniRule"/>
</dbReference>
<dbReference type="GO" id="GO:0016114">
    <property type="term" value="P:terpenoid biosynthetic process"/>
    <property type="evidence" value="ECO:0007669"/>
    <property type="project" value="InterPro"/>
</dbReference>
<dbReference type="Gene3D" id="3.30.230.10">
    <property type="match status" value="1"/>
</dbReference>
<dbReference type="Gene3D" id="3.30.70.890">
    <property type="entry name" value="GHMP kinase, C-terminal domain"/>
    <property type="match status" value="1"/>
</dbReference>
<dbReference type="HAMAP" id="MF_00061">
    <property type="entry name" value="IspE"/>
    <property type="match status" value="1"/>
</dbReference>
<dbReference type="InterPro" id="IPR013750">
    <property type="entry name" value="GHMP_kinase_C_dom"/>
</dbReference>
<dbReference type="InterPro" id="IPR036554">
    <property type="entry name" value="GHMP_kinase_C_sf"/>
</dbReference>
<dbReference type="InterPro" id="IPR006204">
    <property type="entry name" value="GHMP_kinase_N_dom"/>
</dbReference>
<dbReference type="InterPro" id="IPR004424">
    <property type="entry name" value="IspE"/>
</dbReference>
<dbReference type="InterPro" id="IPR020568">
    <property type="entry name" value="Ribosomal_Su5_D2-typ_SF"/>
</dbReference>
<dbReference type="InterPro" id="IPR014721">
    <property type="entry name" value="Ribsml_uS5_D2-typ_fold_subgr"/>
</dbReference>
<dbReference type="NCBIfam" id="TIGR00154">
    <property type="entry name" value="ispE"/>
    <property type="match status" value="1"/>
</dbReference>
<dbReference type="PANTHER" id="PTHR43527">
    <property type="entry name" value="4-DIPHOSPHOCYTIDYL-2-C-METHYL-D-ERYTHRITOL KINASE, CHLOROPLASTIC"/>
    <property type="match status" value="1"/>
</dbReference>
<dbReference type="PANTHER" id="PTHR43527:SF2">
    <property type="entry name" value="4-DIPHOSPHOCYTIDYL-2-C-METHYL-D-ERYTHRITOL KINASE, CHLOROPLASTIC"/>
    <property type="match status" value="1"/>
</dbReference>
<dbReference type="Pfam" id="PF08544">
    <property type="entry name" value="GHMP_kinases_C"/>
    <property type="match status" value="1"/>
</dbReference>
<dbReference type="Pfam" id="PF00288">
    <property type="entry name" value="GHMP_kinases_N"/>
    <property type="match status" value="1"/>
</dbReference>
<dbReference type="PIRSF" id="PIRSF010376">
    <property type="entry name" value="IspE"/>
    <property type="match status" value="1"/>
</dbReference>
<dbReference type="SUPFAM" id="SSF55060">
    <property type="entry name" value="GHMP Kinase, C-terminal domain"/>
    <property type="match status" value="1"/>
</dbReference>
<dbReference type="SUPFAM" id="SSF54211">
    <property type="entry name" value="Ribosomal protein S5 domain 2-like"/>
    <property type="match status" value="1"/>
</dbReference>
<keyword id="KW-0067">ATP-binding</keyword>
<keyword id="KW-0414">Isoprene biosynthesis</keyword>
<keyword id="KW-0418">Kinase</keyword>
<keyword id="KW-0547">Nucleotide-binding</keyword>
<keyword id="KW-1185">Reference proteome</keyword>
<keyword id="KW-0808">Transferase</keyword>
<protein>
    <recommendedName>
        <fullName evidence="1">4-diphosphocytidyl-2-C-methyl-D-erythritol kinase</fullName>
        <shortName evidence="1">CMK</shortName>
        <ecNumber evidence="1">2.7.1.148</ecNumber>
    </recommendedName>
    <alternativeName>
        <fullName evidence="1">4-(cytidine-5'-diphospho)-2-C-methyl-D-erythritol kinase</fullName>
    </alternativeName>
</protein>
<sequence>MIETTDSLRDCLAPAKLNLFLHITGRRPDGYHTLQTVFQLLDWGDTLHFTRRDDGLITRRTEIADVPPEHDLTVRAATLLKTHTGSPEGVDIEIDKRLPMGAGLGGGSSNAATTLLALNRLWKLNLPRLELQALALKLGADVPFFVFGKNAFAQGVGEALDVVQLPPRHFLVVTPRVHVPTAAIFSEKALTRDSKPLTITDFPAELSCNTEWPESFGRNDMQQVVVGKYAEVAQVLRWFENVAPARMSGSGASVFAAFRSKAEAEAVQAKLPAEWNSAVAASLDQHPLFTFAS</sequence>
<feature type="chain" id="PRO_1000007826" description="4-diphosphocytidyl-2-C-methyl-D-erythritol kinase">
    <location>
        <begin position="1"/>
        <end position="293"/>
    </location>
</feature>
<feature type="active site" evidence="1">
    <location>
        <position position="16"/>
    </location>
</feature>
<feature type="active site" evidence="1">
    <location>
        <position position="141"/>
    </location>
</feature>
<feature type="binding site" evidence="1">
    <location>
        <begin position="99"/>
        <end position="109"/>
    </location>
    <ligand>
        <name>ATP</name>
        <dbReference type="ChEBI" id="CHEBI:30616"/>
    </ligand>
</feature>
<evidence type="ECO:0000255" key="1">
    <source>
        <dbReference type="HAMAP-Rule" id="MF_00061"/>
    </source>
</evidence>
<organism>
    <name type="scientific">Paraburkholderia xenovorans (strain LB400)</name>
    <dbReference type="NCBI Taxonomy" id="266265"/>
    <lineage>
        <taxon>Bacteria</taxon>
        <taxon>Pseudomonadati</taxon>
        <taxon>Pseudomonadota</taxon>
        <taxon>Betaproteobacteria</taxon>
        <taxon>Burkholderiales</taxon>
        <taxon>Burkholderiaceae</taxon>
        <taxon>Paraburkholderia</taxon>
    </lineage>
</organism>
<name>ISPE_PARXL</name>
<proteinExistence type="inferred from homology"/>